<feature type="chain" id="PRO_0000083901" description="Hemophore HasA">
    <location>
        <begin position="1"/>
        <end position="188"/>
    </location>
</feature>
<feature type="binding site" description="axial binding residue">
    <location>
        <position position="32"/>
    </location>
    <ligand>
        <name>heme</name>
        <dbReference type="ChEBI" id="CHEBI:30413"/>
    </ligand>
    <ligandPart>
        <name>Fe</name>
        <dbReference type="ChEBI" id="CHEBI:18248"/>
    </ligandPart>
</feature>
<feature type="binding site" description="axial binding residue">
    <location>
        <position position="75"/>
    </location>
    <ligand>
        <name>heme</name>
        <dbReference type="ChEBI" id="CHEBI:30413"/>
    </ligand>
    <ligandPart>
        <name>Fe</name>
        <dbReference type="ChEBI" id="CHEBI:18248"/>
    </ligandPart>
</feature>
<feature type="sequence conflict" description="In Ref. 2; AA sequence." evidence="4" ref="2">
    <original>A</original>
    <variation>Q</variation>
    <location>
        <position position="170"/>
    </location>
</feature>
<feature type="strand" evidence="5">
    <location>
        <begin position="4"/>
        <end position="7"/>
    </location>
</feature>
<feature type="helix" evidence="5">
    <location>
        <begin position="9"/>
        <end position="11"/>
    </location>
</feature>
<feature type="strand" evidence="7">
    <location>
        <begin position="12"/>
        <end position="15"/>
    </location>
</feature>
<feature type="helix" evidence="5">
    <location>
        <begin position="16"/>
        <end position="27"/>
    </location>
</feature>
<feature type="turn" evidence="6">
    <location>
        <begin position="34"/>
        <end position="36"/>
    </location>
</feature>
<feature type="helix" evidence="5">
    <location>
        <begin position="39"/>
        <end position="41"/>
    </location>
</feature>
<feature type="strand" evidence="5">
    <location>
        <begin position="44"/>
        <end position="58"/>
    </location>
</feature>
<feature type="turn" evidence="5">
    <location>
        <begin position="60"/>
        <end position="62"/>
    </location>
</feature>
<feature type="strand" evidence="5">
    <location>
        <begin position="65"/>
        <end position="75"/>
    </location>
</feature>
<feature type="strand" evidence="5">
    <location>
        <begin position="79"/>
        <end position="81"/>
    </location>
</feature>
<feature type="strand" evidence="5">
    <location>
        <begin position="85"/>
        <end position="99"/>
    </location>
</feature>
<feature type="strand" evidence="5">
    <location>
        <begin position="102"/>
        <end position="104"/>
    </location>
</feature>
<feature type="strand" evidence="5">
    <location>
        <begin position="107"/>
        <end position="116"/>
    </location>
</feature>
<feature type="strand" evidence="5">
    <location>
        <begin position="120"/>
        <end position="122"/>
    </location>
</feature>
<feature type="helix" evidence="5">
    <location>
        <begin position="124"/>
        <end position="129"/>
    </location>
</feature>
<feature type="helix" evidence="5">
    <location>
        <begin position="131"/>
        <end position="140"/>
    </location>
</feature>
<feature type="helix" evidence="5">
    <location>
        <begin position="145"/>
        <end position="155"/>
    </location>
</feature>
<feature type="helix" evidence="5">
    <location>
        <begin position="156"/>
        <end position="158"/>
    </location>
</feature>
<feature type="strand" evidence="8">
    <location>
        <begin position="162"/>
        <end position="165"/>
    </location>
</feature>
<feature type="helix" evidence="5">
    <location>
        <begin position="166"/>
        <end position="173"/>
    </location>
</feature>
<accession>Q54450</accession>
<organism>
    <name type="scientific">Serratia marcescens</name>
    <dbReference type="NCBI Taxonomy" id="615"/>
    <lineage>
        <taxon>Bacteria</taxon>
        <taxon>Pseudomonadati</taxon>
        <taxon>Pseudomonadota</taxon>
        <taxon>Gammaproteobacteria</taxon>
        <taxon>Enterobacterales</taxon>
        <taxon>Yersiniaceae</taxon>
        <taxon>Serratia</taxon>
    </lineage>
</organism>
<evidence type="ECO:0000269" key="1">
    <source>
    </source>
</evidence>
<evidence type="ECO:0000269" key="2">
    <source>
    </source>
</evidence>
<evidence type="ECO:0000269" key="3">
    <source>
    </source>
</evidence>
<evidence type="ECO:0000305" key="4"/>
<evidence type="ECO:0007829" key="5">
    <source>
        <dbReference type="PDB" id="1DK0"/>
    </source>
</evidence>
<evidence type="ECO:0007829" key="6">
    <source>
        <dbReference type="PDB" id="2UYD"/>
    </source>
</evidence>
<evidence type="ECO:0007829" key="7">
    <source>
        <dbReference type="PDB" id="3CSL"/>
    </source>
</evidence>
<evidence type="ECO:0007829" key="8">
    <source>
        <dbReference type="PDB" id="3DDR"/>
    </source>
</evidence>
<name>HASA_SERMA</name>
<reference key="1">
    <citation type="journal article" date="1994" name="Proc. Natl. Acad. Sci. U.S.A.">
        <title>Iron acquisition from heme and hemoglobin by a Serratia marcescens extracellular protein.</title>
        <authorList>
            <person name="Letoffe S."/>
            <person name="Ghigo J.-M."/>
            <person name="Wandersman C."/>
        </authorList>
    </citation>
    <scope>NUCLEOTIDE SEQUENCE [GENOMIC DNA]</scope>
    <scope>PROTEIN SEQUENCE OF 1-11</scope>
    <scope>FUNCTION</scope>
    <scope>SUBCELLULAR LOCATION</scope>
    <scope>INDUCTION</scope>
    <source>
        <strain>SM365</strain>
    </source>
</reference>
<reference key="2">
    <citation type="journal article" date="1997" name="Biochemistry">
        <title>Purification and characterization of an extracellular heme-binding protein, HasA, involved in heme iron acquisition.</title>
        <authorList>
            <person name="Izadi N."/>
            <person name="Henry Y."/>
            <person name="Haladjian J."/>
            <person name="Goldberg M.E."/>
            <person name="Wandersman C."/>
            <person name="Delepierre M."/>
            <person name="Lecroisey A."/>
        </authorList>
    </citation>
    <scope>PROTEIN SEQUENCE</scope>
    <scope>SUBUNIT</scope>
</reference>
<reference key="3">
    <citation type="journal article" date="1997" name="J. Bacteriol.">
        <title>A new type of hemophore-dependent heme acquisition system of Serratia marcescens reconstituted in Escherichia coli.</title>
        <authorList>
            <person name="Ghigo J.M."/>
            <person name="Letoffe S."/>
            <person name="Wandersman C."/>
        </authorList>
    </citation>
    <scope>FUNCTION</scope>
    <source>
        <strain>SM365</strain>
    </source>
</reference>
<reference key="4">
    <citation type="journal article" date="1999" name="Nat. Struct. Biol.">
        <title>The crystal structure of HasA, a hemophore secreted by Serratia marcescens.</title>
        <authorList>
            <person name="Arnoux P."/>
            <person name="Haser R."/>
            <person name="Izadi N."/>
            <person name="Lecroisey A."/>
            <person name="Delepierre M."/>
            <person name="Wandersman C."/>
            <person name="Czjzek M."/>
        </authorList>
    </citation>
    <scope>X-RAY CRYSTALLOGRAPHY (1.9 ANGSTROMS)</scope>
</reference>
<reference key="5">
    <citation type="journal article" date="2000" name="Proteins">
        <title>Functional aspects of the heme bound hemophore HasA by structural analysis of various crystal forms.</title>
        <authorList>
            <person name="Arnoux P."/>
            <person name="Haser R."/>
            <person name="Izadi-Pruneyre N."/>
            <person name="Lecroisey A."/>
            <person name="Czjzek M."/>
        </authorList>
    </citation>
    <scope>X-RAY CRYSTALLOGRAPHY (1.77 ANGSTROMS)</scope>
</reference>
<dbReference type="EMBL" id="X81195">
    <property type="protein sequence ID" value="CAA57068.1"/>
    <property type="molecule type" value="Genomic_DNA"/>
</dbReference>
<dbReference type="PIR" id="T48671">
    <property type="entry name" value="T48671"/>
</dbReference>
<dbReference type="RefSeq" id="WP_016928898.1">
    <property type="nucleotide sequence ID" value="NZ_VOUW01000012.1"/>
</dbReference>
<dbReference type="PDB" id="1B2V">
    <property type="method" value="X-ray"/>
    <property type="resolution" value="1.90 A"/>
    <property type="chains" value="A=1-188"/>
</dbReference>
<dbReference type="PDB" id="1DK0">
    <property type="method" value="X-ray"/>
    <property type="resolution" value="1.77 A"/>
    <property type="chains" value="A/B=1-188"/>
</dbReference>
<dbReference type="PDB" id="1DKH">
    <property type="method" value="X-ray"/>
    <property type="resolution" value="3.20 A"/>
    <property type="chains" value="A=1-188"/>
</dbReference>
<dbReference type="PDB" id="1YBJ">
    <property type="method" value="NMR"/>
    <property type="chains" value="A=2-179"/>
</dbReference>
<dbReference type="PDB" id="2CN4">
    <property type="method" value="X-ray"/>
    <property type="resolution" value="2.30 A"/>
    <property type="chains" value="A/B=2-174"/>
</dbReference>
<dbReference type="PDB" id="2UYD">
    <property type="method" value="X-ray"/>
    <property type="resolution" value="2.70 A"/>
    <property type="chains" value="X=1-188"/>
</dbReference>
<dbReference type="PDB" id="3CSL">
    <property type="method" value="X-ray"/>
    <property type="resolution" value="2.70 A"/>
    <property type="chains" value="C/D=2-188"/>
</dbReference>
<dbReference type="PDB" id="3CSN">
    <property type="method" value="X-ray"/>
    <property type="resolution" value="3.00 A"/>
    <property type="chains" value="C/D=2-188"/>
</dbReference>
<dbReference type="PDB" id="3DDR">
    <property type="method" value="X-ray"/>
    <property type="resolution" value="2.80 A"/>
    <property type="chains" value="C/D=2-188"/>
</dbReference>
<dbReference type="PDB" id="5C58">
    <property type="method" value="X-ray"/>
    <property type="resolution" value="2.79 A"/>
    <property type="chains" value="B=2-188"/>
</dbReference>
<dbReference type="PDBsum" id="1B2V"/>
<dbReference type="PDBsum" id="1DK0"/>
<dbReference type="PDBsum" id="1DKH"/>
<dbReference type="PDBsum" id="1YBJ"/>
<dbReference type="PDBsum" id="2CN4"/>
<dbReference type="PDBsum" id="2UYD"/>
<dbReference type="PDBsum" id="3CSL"/>
<dbReference type="PDBsum" id="3CSN"/>
<dbReference type="PDBsum" id="3DDR"/>
<dbReference type="PDBsum" id="5C58"/>
<dbReference type="BMRB" id="Q54450"/>
<dbReference type="SMR" id="Q54450"/>
<dbReference type="DIP" id="DIP-48682N"/>
<dbReference type="IntAct" id="Q54450">
    <property type="interactions" value="2"/>
</dbReference>
<dbReference type="STRING" id="273526.SMDB11_0285"/>
<dbReference type="TCDB" id="1.B.14.5.1">
    <property type="family name" value="the outer membrane receptor (omr) family"/>
</dbReference>
<dbReference type="PATRIC" id="fig|615.99.peg.4532"/>
<dbReference type="EvolutionaryTrace" id="Q54450"/>
<dbReference type="GO" id="GO:0005576">
    <property type="term" value="C:extracellular region"/>
    <property type="evidence" value="ECO:0007669"/>
    <property type="project" value="UniProtKB-SubCell"/>
</dbReference>
<dbReference type="GO" id="GO:0046872">
    <property type="term" value="F:metal ion binding"/>
    <property type="evidence" value="ECO:0007669"/>
    <property type="project" value="UniProtKB-KW"/>
</dbReference>
<dbReference type="Gene3D" id="3.30.1500.10">
    <property type="entry name" value="Haem-binding HasA"/>
    <property type="match status" value="1"/>
</dbReference>
<dbReference type="InterPro" id="IPR010495">
    <property type="entry name" value="HasA_haem-bd"/>
</dbReference>
<dbReference type="InterPro" id="IPR036912">
    <property type="entry name" value="HasA_haem-bd_sf"/>
</dbReference>
<dbReference type="Pfam" id="PF06438">
    <property type="entry name" value="HasA"/>
    <property type="match status" value="1"/>
</dbReference>
<dbReference type="PIRSF" id="PIRSF019876">
    <property type="entry name" value="HasA"/>
    <property type="match status" value="1"/>
</dbReference>
<dbReference type="SUPFAM" id="SSF54621">
    <property type="entry name" value="Heme-binding protein A (HasA)"/>
    <property type="match status" value="1"/>
</dbReference>
<keyword id="KW-0002">3D-structure</keyword>
<keyword id="KW-0903">Direct protein sequencing</keyword>
<keyword id="KW-0349">Heme</keyword>
<keyword id="KW-0408">Iron</keyword>
<keyword id="KW-0479">Metal-binding</keyword>
<keyword id="KW-0964">Secreted</keyword>
<sequence length="188" mass="19283">MAFSVNYDSSFGGYSIHDYLGQWASTFGDVNHTNGNVTDANSGGFYGGSLSGSQYAISSTANQVTAFVAGGNLTYTLFNEPAHTLYGQLDSLSFGDGLSGGDTSPYSIQVPDVSFGGLNLSSLQAQGHDGVVHQVVYGLMSGDTGALETALNGILDDYGLSVNSTFDQVAAATAVGVQHADSPELLAA</sequence>
<protein>
    <recommendedName>
        <fullName>Hemophore HasA</fullName>
    </recommendedName>
    <alternativeName>
        <fullName>Heme acquisition system protein A</fullName>
    </alternativeName>
</protein>
<comment type="function">
    <text evidence="1 2">Can bind free heme and also acquire it from hemoglobin. Conveys heme from hemoglobin to the HasR receptor which releases it into the bacterium. HasR alone can take up heme but the synergy between HasA and HasR increases heme uptake 100-fold.</text>
</comment>
<comment type="subunit">
    <text evidence="3">Monomer.</text>
</comment>
<comment type="interaction">
    <interactant intactId="EBI-6399956">
        <id>Q54450</id>
    </interactant>
    <interactant intactId="EBI-6399951">
        <id>Q79AD2</id>
        <label>hasR</label>
    </interactant>
    <organismsDiffer>false</organismsDiffer>
    <experiments>3</experiments>
</comment>
<comment type="subcellular location">
    <subcellularLocation>
        <location evidence="1">Secreted</location>
    </subcellularLocation>
</comment>
<comment type="induction">
    <text evidence="1">By iron depletion.</text>
</comment>
<gene>
    <name type="primary">hasA</name>
</gene>
<proteinExistence type="evidence at protein level"/>